<reference key="1">
    <citation type="journal article" date="2009" name="PLoS ONE">
        <title>Genome degradation in Brucella ovis corresponds with narrowing of its host range and tissue tropism.</title>
        <authorList>
            <person name="Tsolis R.M."/>
            <person name="Seshadri R."/>
            <person name="Santos R.L."/>
            <person name="Sangari F.J."/>
            <person name="Lobo J.M."/>
            <person name="de Jong M.F."/>
            <person name="Ren Q."/>
            <person name="Myers G."/>
            <person name="Brinkac L.M."/>
            <person name="Nelson W.C."/>
            <person name="Deboy R.T."/>
            <person name="Angiuoli S."/>
            <person name="Khouri H."/>
            <person name="Dimitrov G."/>
            <person name="Robinson J.R."/>
            <person name="Mulligan S."/>
            <person name="Walker R.L."/>
            <person name="Elzer P.E."/>
            <person name="Hassan K.A."/>
            <person name="Paulsen I.T."/>
        </authorList>
    </citation>
    <scope>NUCLEOTIDE SEQUENCE [LARGE SCALE GENOMIC DNA]</scope>
    <source>
        <strain>ATCC 25840 / 63/290 / NCTC 10512</strain>
    </source>
</reference>
<organism>
    <name type="scientific">Brucella ovis (strain ATCC 25840 / 63/290 / NCTC 10512)</name>
    <dbReference type="NCBI Taxonomy" id="444178"/>
    <lineage>
        <taxon>Bacteria</taxon>
        <taxon>Pseudomonadati</taxon>
        <taxon>Pseudomonadota</taxon>
        <taxon>Alphaproteobacteria</taxon>
        <taxon>Hyphomicrobiales</taxon>
        <taxon>Brucellaceae</taxon>
        <taxon>Brucella/Ochrobactrum group</taxon>
        <taxon>Brucella</taxon>
    </lineage>
</organism>
<evidence type="ECO:0000255" key="1">
    <source>
        <dbReference type="HAMAP-Rule" id="MF_00385"/>
    </source>
</evidence>
<evidence type="ECO:0000256" key="2">
    <source>
        <dbReference type="SAM" id="MobiDB-lite"/>
    </source>
</evidence>
<evidence type="ECO:0000305" key="3"/>
<comment type="similarity">
    <text evidence="1">Belongs to the bacterial ribosomal protein bS16 family.</text>
</comment>
<keyword id="KW-0687">Ribonucleoprotein</keyword>
<keyword id="KW-0689">Ribosomal protein</keyword>
<gene>
    <name evidence="1" type="primary">rpsP</name>
    <name type="ordered locus">BOV_1756</name>
</gene>
<feature type="chain" id="PRO_1000049221" description="Small ribosomal subunit protein bS16">
    <location>
        <begin position="1"/>
        <end position="134"/>
    </location>
</feature>
<feature type="region of interest" description="Disordered" evidence="2">
    <location>
        <begin position="79"/>
        <end position="134"/>
    </location>
</feature>
<feature type="compositionally biased region" description="Low complexity" evidence="2">
    <location>
        <begin position="115"/>
        <end position="134"/>
    </location>
</feature>
<dbReference type="EMBL" id="CP000708">
    <property type="protein sequence ID" value="ABQ61457.1"/>
    <property type="molecule type" value="Genomic_DNA"/>
</dbReference>
<dbReference type="RefSeq" id="WP_002967942.1">
    <property type="nucleotide sequence ID" value="NC_009505.1"/>
</dbReference>
<dbReference type="SMR" id="A5VSG4"/>
<dbReference type="GeneID" id="97533054"/>
<dbReference type="KEGG" id="bov:BOV_1756"/>
<dbReference type="HOGENOM" id="CLU_100590_3_1_5"/>
<dbReference type="PhylomeDB" id="A5VSG4"/>
<dbReference type="Proteomes" id="UP000006383">
    <property type="component" value="Chromosome I"/>
</dbReference>
<dbReference type="GO" id="GO:0005737">
    <property type="term" value="C:cytoplasm"/>
    <property type="evidence" value="ECO:0007669"/>
    <property type="project" value="UniProtKB-ARBA"/>
</dbReference>
<dbReference type="GO" id="GO:0015935">
    <property type="term" value="C:small ribosomal subunit"/>
    <property type="evidence" value="ECO:0007669"/>
    <property type="project" value="TreeGrafter"/>
</dbReference>
<dbReference type="GO" id="GO:0003735">
    <property type="term" value="F:structural constituent of ribosome"/>
    <property type="evidence" value="ECO:0007669"/>
    <property type="project" value="InterPro"/>
</dbReference>
<dbReference type="GO" id="GO:0006412">
    <property type="term" value="P:translation"/>
    <property type="evidence" value="ECO:0007669"/>
    <property type="project" value="UniProtKB-UniRule"/>
</dbReference>
<dbReference type="Gene3D" id="3.30.1320.10">
    <property type="match status" value="1"/>
</dbReference>
<dbReference type="HAMAP" id="MF_00385">
    <property type="entry name" value="Ribosomal_bS16"/>
    <property type="match status" value="1"/>
</dbReference>
<dbReference type="InterPro" id="IPR000307">
    <property type="entry name" value="Ribosomal_bS16"/>
</dbReference>
<dbReference type="InterPro" id="IPR023803">
    <property type="entry name" value="Ribosomal_bS16_dom_sf"/>
</dbReference>
<dbReference type="NCBIfam" id="TIGR00002">
    <property type="entry name" value="S16"/>
    <property type="match status" value="1"/>
</dbReference>
<dbReference type="PANTHER" id="PTHR12919">
    <property type="entry name" value="30S RIBOSOMAL PROTEIN S16"/>
    <property type="match status" value="1"/>
</dbReference>
<dbReference type="PANTHER" id="PTHR12919:SF20">
    <property type="entry name" value="SMALL RIBOSOMAL SUBUNIT PROTEIN BS16M"/>
    <property type="match status" value="1"/>
</dbReference>
<dbReference type="Pfam" id="PF00886">
    <property type="entry name" value="Ribosomal_S16"/>
    <property type="match status" value="1"/>
</dbReference>
<dbReference type="SUPFAM" id="SSF54565">
    <property type="entry name" value="Ribosomal protein S16"/>
    <property type="match status" value="1"/>
</dbReference>
<name>RS16_BRUO2</name>
<protein>
    <recommendedName>
        <fullName evidence="1">Small ribosomal subunit protein bS16</fullName>
    </recommendedName>
    <alternativeName>
        <fullName evidence="3">30S ribosomal protein S16</fullName>
    </alternativeName>
</protein>
<accession>A5VSG4</accession>
<proteinExistence type="inferred from homology"/>
<sequence length="134" mass="14530">MALKIRLARAGSKKRPYYHVVVADVRAPRDGRFIETVGSWNPVLPKDAERVKLDAERIQHWIAQGAQPTDRVLRFLDQAGIAKRPSRNNPTKGEPGKKAQERLALAKQAEEEAAAKAAEAAAAAAAPAEEAASE</sequence>